<dbReference type="EMBL" id="AE016958">
    <property type="protein sequence ID" value="AAS06675.1"/>
    <property type="molecule type" value="Genomic_DNA"/>
</dbReference>
<dbReference type="RefSeq" id="WP_003873556.1">
    <property type="nucleotide sequence ID" value="NZ_CP106873.1"/>
</dbReference>
<dbReference type="SMR" id="Q73SE9"/>
<dbReference type="STRING" id="262316.MAP_4125"/>
<dbReference type="KEGG" id="mpa:MAP_4125"/>
<dbReference type="eggNOG" id="COG0244">
    <property type="taxonomic scope" value="Bacteria"/>
</dbReference>
<dbReference type="HOGENOM" id="CLU_092227_1_0_11"/>
<dbReference type="Proteomes" id="UP000000580">
    <property type="component" value="Chromosome"/>
</dbReference>
<dbReference type="GO" id="GO:0015934">
    <property type="term" value="C:large ribosomal subunit"/>
    <property type="evidence" value="ECO:0007669"/>
    <property type="project" value="InterPro"/>
</dbReference>
<dbReference type="GO" id="GO:0070180">
    <property type="term" value="F:large ribosomal subunit rRNA binding"/>
    <property type="evidence" value="ECO:0007669"/>
    <property type="project" value="UniProtKB-UniRule"/>
</dbReference>
<dbReference type="GO" id="GO:0003735">
    <property type="term" value="F:structural constituent of ribosome"/>
    <property type="evidence" value="ECO:0007669"/>
    <property type="project" value="InterPro"/>
</dbReference>
<dbReference type="GO" id="GO:0006412">
    <property type="term" value="P:translation"/>
    <property type="evidence" value="ECO:0007669"/>
    <property type="project" value="UniProtKB-UniRule"/>
</dbReference>
<dbReference type="CDD" id="cd05797">
    <property type="entry name" value="Ribosomal_L10"/>
    <property type="match status" value="1"/>
</dbReference>
<dbReference type="FunFam" id="3.30.70.1730:FF:000003">
    <property type="entry name" value="50S ribosomal protein L10"/>
    <property type="match status" value="1"/>
</dbReference>
<dbReference type="Gene3D" id="3.30.70.1730">
    <property type="match status" value="1"/>
</dbReference>
<dbReference type="Gene3D" id="6.10.250.290">
    <property type="match status" value="1"/>
</dbReference>
<dbReference type="HAMAP" id="MF_00362">
    <property type="entry name" value="Ribosomal_uL10"/>
    <property type="match status" value="1"/>
</dbReference>
<dbReference type="InterPro" id="IPR001790">
    <property type="entry name" value="Ribosomal_uL10"/>
</dbReference>
<dbReference type="InterPro" id="IPR043141">
    <property type="entry name" value="Ribosomal_uL10-like_sf"/>
</dbReference>
<dbReference type="InterPro" id="IPR022973">
    <property type="entry name" value="Ribosomal_uL10_bac"/>
</dbReference>
<dbReference type="InterPro" id="IPR047865">
    <property type="entry name" value="Ribosomal_uL10_bac_type"/>
</dbReference>
<dbReference type="InterPro" id="IPR002363">
    <property type="entry name" value="Ribosomal_uL10_CS_bac"/>
</dbReference>
<dbReference type="NCBIfam" id="NF000955">
    <property type="entry name" value="PRK00099.1-1"/>
    <property type="match status" value="1"/>
</dbReference>
<dbReference type="PANTHER" id="PTHR11560">
    <property type="entry name" value="39S RIBOSOMAL PROTEIN L10, MITOCHONDRIAL"/>
    <property type="match status" value="1"/>
</dbReference>
<dbReference type="Pfam" id="PF00466">
    <property type="entry name" value="Ribosomal_L10"/>
    <property type="match status" value="1"/>
</dbReference>
<dbReference type="SUPFAM" id="SSF160369">
    <property type="entry name" value="Ribosomal protein L10-like"/>
    <property type="match status" value="1"/>
</dbReference>
<dbReference type="PROSITE" id="PS01109">
    <property type="entry name" value="RIBOSOMAL_L10"/>
    <property type="match status" value="1"/>
</dbReference>
<organism>
    <name type="scientific">Mycolicibacterium paratuberculosis (strain ATCC BAA-968 / K-10)</name>
    <name type="common">Mycobacterium paratuberculosis</name>
    <dbReference type="NCBI Taxonomy" id="262316"/>
    <lineage>
        <taxon>Bacteria</taxon>
        <taxon>Bacillati</taxon>
        <taxon>Actinomycetota</taxon>
        <taxon>Actinomycetes</taxon>
        <taxon>Mycobacteriales</taxon>
        <taxon>Mycobacteriaceae</taxon>
        <taxon>Mycobacterium</taxon>
        <taxon>Mycobacterium avium complex (MAC)</taxon>
    </lineage>
</organism>
<keyword id="KW-1185">Reference proteome</keyword>
<keyword id="KW-0687">Ribonucleoprotein</keyword>
<keyword id="KW-0689">Ribosomal protein</keyword>
<keyword id="KW-0694">RNA-binding</keyword>
<keyword id="KW-0699">rRNA-binding</keyword>
<proteinExistence type="inferred from homology"/>
<name>RL10_MYCPA</name>
<reference key="1">
    <citation type="journal article" date="2005" name="Proc. Natl. Acad. Sci. U.S.A.">
        <title>The complete genome sequence of Mycobacterium avium subspecies paratuberculosis.</title>
        <authorList>
            <person name="Li L."/>
            <person name="Bannantine J.P."/>
            <person name="Zhang Q."/>
            <person name="Amonsin A."/>
            <person name="May B.J."/>
            <person name="Alt D."/>
            <person name="Banerji N."/>
            <person name="Kanjilal S."/>
            <person name="Kapur V."/>
        </authorList>
    </citation>
    <scope>NUCLEOTIDE SEQUENCE [LARGE SCALE GENOMIC DNA]</scope>
    <source>
        <strain>ATCC BAA-968 / K-10</strain>
    </source>
</reference>
<gene>
    <name evidence="1" type="primary">rplJ</name>
    <name type="ordered locus">MAP_4125</name>
</gene>
<evidence type="ECO:0000255" key="1">
    <source>
        <dbReference type="HAMAP-Rule" id="MF_00362"/>
    </source>
</evidence>
<evidence type="ECO:0000256" key="2">
    <source>
        <dbReference type="SAM" id="MobiDB-lite"/>
    </source>
</evidence>
<evidence type="ECO:0000305" key="3"/>
<accession>Q73SE9</accession>
<feature type="chain" id="PRO_0000154670" description="Large ribosomal subunit protein uL10">
    <location>
        <begin position="1"/>
        <end position="196"/>
    </location>
</feature>
<feature type="region of interest" description="Disordered" evidence="2">
    <location>
        <begin position="167"/>
        <end position="196"/>
    </location>
</feature>
<protein>
    <recommendedName>
        <fullName evidence="1">Large ribosomal subunit protein uL10</fullName>
    </recommendedName>
    <alternativeName>
        <fullName evidence="3">50S ribosomal protein L10</fullName>
    </alternativeName>
</protein>
<sequence length="196" mass="20168">MARADKATAVADIAEQFKEATATLITEYRGLTVANLAELRRSLSGAATYSVAKNTLVKRAASEAGIEGLDELFAGPTAIAFVTGEPVDAAKAIKTFAKEHKALVIKGGYMDGRALSVAEVERIADLESREVLLAKLAGAMKGNLAKAAGLFNAPASQVARLAAALQEKKAAEGPAEAPQPATEPPAEAPEAPADAE</sequence>
<comment type="function">
    <text evidence="1">Forms part of the ribosomal stalk, playing a central role in the interaction of the ribosome with GTP-bound translation factors.</text>
</comment>
<comment type="subunit">
    <text evidence="1">Part of the ribosomal stalk of the 50S ribosomal subunit. The N-terminus interacts with L11 and the large rRNA to form the base of the stalk. The C-terminus forms an elongated spine to which L12 dimers bind in a sequential fashion forming a multimeric L10(L12)X complex.</text>
</comment>
<comment type="similarity">
    <text evidence="1">Belongs to the universal ribosomal protein uL10 family.</text>
</comment>